<dbReference type="EMBL" id="CP000284">
    <property type="protein sequence ID" value="ABE50598.1"/>
    <property type="molecule type" value="Genomic_DNA"/>
</dbReference>
<dbReference type="RefSeq" id="WP_011480551.1">
    <property type="nucleotide sequence ID" value="NC_007947.1"/>
</dbReference>
<dbReference type="SMR" id="Q1GYT9"/>
<dbReference type="STRING" id="265072.Mfla_2331"/>
<dbReference type="KEGG" id="mfa:Mfla_2331"/>
<dbReference type="eggNOG" id="COG0335">
    <property type="taxonomic scope" value="Bacteria"/>
</dbReference>
<dbReference type="HOGENOM" id="CLU_103507_1_0_4"/>
<dbReference type="OrthoDB" id="9803541at2"/>
<dbReference type="Proteomes" id="UP000002440">
    <property type="component" value="Chromosome"/>
</dbReference>
<dbReference type="GO" id="GO:0022625">
    <property type="term" value="C:cytosolic large ribosomal subunit"/>
    <property type="evidence" value="ECO:0007669"/>
    <property type="project" value="TreeGrafter"/>
</dbReference>
<dbReference type="GO" id="GO:0003735">
    <property type="term" value="F:structural constituent of ribosome"/>
    <property type="evidence" value="ECO:0007669"/>
    <property type="project" value="InterPro"/>
</dbReference>
<dbReference type="GO" id="GO:0006412">
    <property type="term" value="P:translation"/>
    <property type="evidence" value="ECO:0007669"/>
    <property type="project" value="UniProtKB-UniRule"/>
</dbReference>
<dbReference type="FunFam" id="2.30.30.790:FF:000001">
    <property type="entry name" value="50S ribosomal protein L19"/>
    <property type="match status" value="1"/>
</dbReference>
<dbReference type="Gene3D" id="2.30.30.790">
    <property type="match status" value="1"/>
</dbReference>
<dbReference type="HAMAP" id="MF_00402">
    <property type="entry name" value="Ribosomal_bL19"/>
    <property type="match status" value="1"/>
</dbReference>
<dbReference type="InterPro" id="IPR001857">
    <property type="entry name" value="Ribosomal_bL19"/>
</dbReference>
<dbReference type="InterPro" id="IPR018257">
    <property type="entry name" value="Ribosomal_bL19_CS"/>
</dbReference>
<dbReference type="InterPro" id="IPR038657">
    <property type="entry name" value="Ribosomal_bL19_sf"/>
</dbReference>
<dbReference type="InterPro" id="IPR008991">
    <property type="entry name" value="Translation_prot_SH3-like_sf"/>
</dbReference>
<dbReference type="NCBIfam" id="TIGR01024">
    <property type="entry name" value="rplS_bact"/>
    <property type="match status" value="1"/>
</dbReference>
<dbReference type="PANTHER" id="PTHR15680:SF9">
    <property type="entry name" value="LARGE RIBOSOMAL SUBUNIT PROTEIN BL19M"/>
    <property type="match status" value="1"/>
</dbReference>
<dbReference type="PANTHER" id="PTHR15680">
    <property type="entry name" value="RIBOSOMAL PROTEIN L19"/>
    <property type="match status" value="1"/>
</dbReference>
<dbReference type="Pfam" id="PF01245">
    <property type="entry name" value="Ribosomal_L19"/>
    <property type="match status" value="1"/>
</dbReference>
<dbReference type="PIRSF" id="PIRSF002191">
    <property type="entry name" value="Ribosomal_L19"/>
    <property type="match status" value="1"/>
</dbReference>
<dbReference type="PRINTS" id="PR00061">
    <property type="entry name" value="RIBOSOMALL19"/>
</dbReference>
<dbReference type="SUPFAM" id="SSF50104">
    <property type="entry name" value="Translation proteins SH3-like domain"/>
    <property type="match status" value="1"/>
</dbReference>
<dbReference type="PROSITE" id="PS01015">
    <property type="entry name" value="RIBOSOMAL_L19"/>
    <property type="match status" value="1"/>
</dbReference>
<feature type="chain" id="PRO_0000252519" description="Large ribosomal subunit protein bL19">
    <location>
        <begin position="1"/>
        <end position="129"/>
    </location>
</feature>
<name>RL19_METFK</name>
<reference key="1">
    <citation type="submission" date="2006-03" db="EMBL/GenBank/DDBJ databases">
        <title>Complete sequence of Methylobacillus flagellatus KT.</title>
        <authorList>
            <consortium name="US DOE Joint Genome Institute"/>
            <person name="Copeland A."/>
            <person name="Lucas S."/>
            <person name="Lapidus A."/>
            <person name="Barry K."/>
            <person name="Detter J.C."/>
            <person name="Glavina del Rio T."/>
            <person name="Hammon N."/>
            <person name="Israni S."/>
            <person name="Dalin E."/>
            <person name="Tice H."/>
            <person name="Pitluck S."/>
            <person name="Brettin T."/>
            <person name="Bruce D."/>
            <person name="Han C."/>
            <person name="Tapia R."/>
            <person name="Saunders E."/>
            <person name="Gilna P."/>
            <person name="Schmutz J."/>
            <person name="Larimer F."/>
            <person name="Land M."/>
            <person name="Kyrpides N."/>
            <person name="Anderson I."/>
            <person name="Richardson P."/>
        </authorList>
    </citation>
    <scope>NUCLEOTIDE SEQUENCE [LARGE SCALE GENOMIC DNA]</scope>
    <source>
        <strain>ATCC 51484 / DSM 6875 / VKM B-1610 / KT</strain>
    </source>
</reference>
<gene>
    <name evidence="1" type="primary">rplS</name>
    <name type="ordered locus">Mfla_2331</name>
</gene>
<organism>
    <name type="scientific">Methylobacillus flagellatus (strain ATCC 51484 / DSM 6875 / VKM B-1610 / KT)</name>
    <dbReference type="NCBI Taxonomy" id="265072"/>
    <lineage>
        <taxon>Bacteria</taxon>
        <taxon>Pseudomonadati</taxon>
        <taxon>Pseudomonadota</taxon>
        <taxon>Betaproteobacteria</taxon>
        <taxon>Nitrosomonadales</taxon>
        <taxon>Methylophilaceae</taxon>
        <taxon>Methylobacillus</taxon>
    </lineage>
</organism>
<protein>
    <recommendedName>
        <fullName evidence="1">Large ribosomal subunit protein bL19</fullName>
    </recommendedName>
    <alternativeName>
        <fullName evidence="2">50S ribosomal protein L19</fullName>
    </alternativeName>
</protein>
<accession>Q1GYT9</accession>
<evidence type="ECO:0000255" key="1">
    <source>
        <dbReference type="HAMAP-Rule" id="MF_00402"/>
    </source>
</evidence>
<evidence type="ECO:0000305" key="2"/>
<sequence>MADIIKQLEQEEIARLGKTIPSFAPGDTVVVGVNVVEGTRKRVQAYEGVVIAIRNRGLNSSFIVRKISSGEGVERTFQTYSPLIASIEVKRRGDVRRSKLYYLRERSGKSARIKEKLQLRAPKETSSAE</sequence>
<keyword id="KW-1185">Reference proteome</keyword>
<keyword id="KW-0687">Ribonucleoprotein</keyword>
<keyword id="KW-0689">Ribosomal protein</keyword>
<comment type="function">
    <text evidence="1">This protein is located at the 30S-50S ribosomal subunit interface and may play a role in the structure and function of the aminoacyl-tRNA binding site.</text>
</comment>
<comment type="similarity">
    <text evidence="1">Belongs to the bacterial ribosomal protein bL19 family.</text>
</comment>
<proteinExistence type="inferred from homology"/>